<organism>
    <name type="scientific">Koribacter versatilis (strain Ellin345)</name>
    <dbReference type="NCBI Taxonomy" id="204669"/>
    <lineage>
        <taxon>Bacteria</taxon>
        <taxon>Pseudomonadati</taxon>
        <taxon>Acidobacteriota</taxon>
        <taxon>Terriglobia</taxon>
        <taxon>Terriglobales</taxon>
        <taxon>Candidatus Korobacteraceae</taxon>
        <taxon>Candidatus Korobacter</taxon>
    </lineage>
</organism>
<feature type="chain" id="PRO_1000049201" description="Small ribosomal subunit protein bS16">
    <location>
        <begin position="1"/>
        <end position="84"/>
    </location>
</feature>
<accession>Q1IMM7</accession>
<gene>
    <name evidence="1" type="primary">rpsP</name>
    <name type="ordered locus">Acid345_2872</name>
</gene>
<keyword id="KW-1185">Reference proteome</keyword>
<keyword id="KW-0687">Ribonucleoprotein</keyword>
<keyword id="KW-0689">Ribosomal protein</keyword>
<name>RS16_KORVE</name>
<protein>
    <recommendedName>
        <fullName evidence="1">Small ribosomal subunit protein bS16</fullName>
    </recommendedName>
    <alternativeName>
        <fullName evidence="2">30S ribosomal protein S16</fullName>
    </alternativeName>
</protein>
<sequence>MLMIRLSRRGARKQPHYRIVVIEKDRARDGRSVEVVGTYNPRTNPGSIELKRERVEYWVSKGAQMSDRVKKLWDKTPAAPASVA</sequence>
<evidence type="ECO:0000255" key="1">
    <source>
        <dbReference type="HAMAP-Rule" id="MF_00385"/>
    </source>
</evidence>
<evidence type="ECO:0000305" key="2"/>
<comment type="similarity">
    <text evidence="1">Belongs to the bacterial ribosomal protein bS16 family.</text>
</comment>
<dbReference type="EMBL" id="CP000360">
    <property type="protein sequence ID" value="ABF41873.1"/>
    <property type="molecule type" value="Genomic_DNA"/>
</dbReference>
<dbReference type="RefSeq" id="WP_011523674.1">
    <property type="nucleotide sequence ID" value="NC_008009.1"/>
</dbReference>
<dbReference type="SMR" id="Q1IMM7"/>
<dbReference type="STRING" id="204669.Acid345_2872"/>
<dbReference type="EnsemblBacteria" id="ABF41873">
    <property type="protein sequence ID" value="ABF41873"/>
    <property type="gene ID" value="Acid345_2872"/>
</dbReference>
<dbReference type="KEGG" id="aba:Acid345_2872"/>
<dbReference type="eggNOG" id="COG0228">
    <property type="taxonomic scope" value="Bacteria"/>
</dbReference>
<dbReference type="HOGENOM" id="CLU_100590_5_1_0"/>
<dbReference type="OrthoDB" id="9807878at2"/>
<dbReference type="Proteomes" id="UP000002432">
    <property type="component" value="Chromosome"/>
</dbReference>
<dbReference type="GO" id="GO:0005737">
    <property type="term" value="C:cytoplasm"/>
    <property type="evidence" value="ECO:0007669"/>
    <property type="project" value="UniProtKB-ARBA"/>
</dbReference>
<dbReference type="GO" id="GO:0015935">
    <property type="term" value="C:small ribosomal subunit"/>
    <property type="evidence" value="ECO:0007669"/>
    <property type="project" value="TreeGrafter"/>
</dbReference>
<dbReference type="GO" id="GO:0003735">
    <property type="term" value="F:structural constituent of ribosome"/>
    <property type="evidence" value="ECO:0007669"/>
    <property type="project" value="InterPro"/>
</dbReference>
<dbReference type="GO" id="GO:0006412">
    <property type="term" value="P:translation"/>
    <property type="evidence" value="ECO:0007669"/>
    <property type="project" value="UniProtKB-UniRule"/>
</dbReference>
<dbReference type="Gene3D" id="3.30.1320.10">
    <property type="match status" value="1"/>
</dbReference>
<dbReference type="HAMAP" id="MF_00385">
    <property type="entry name" value="Ribosomal_bS16"/>
    <property type="match status" value="1"/>
</dbReference>
<dbReference type="InterPro" id="IPR000307">
    <property type="entry name" value="Ribosomal_bS16"/>
</dbReference>
<dbReference type="InterPro" id="IPR020592">
    <property type="entry name" value="Ribosomal_bS16_CS"/>
</dbReference>
<dbReference type="InterPro" id="IPR023803">
    <property type="entry name" value="Ribosomal_bS16_dom_sf"/>
</dbReference>
<dbReference type="NCBIfam" id="TIGR00002">
    <property type="entry name" value="S16"/>
    <property type="match status" value="1"/>
</dbReference>
<dbReference type="PANTHER" id="PTHR12919">
    <property type="entry name" value="30S RIBOSOMAL PROTEIN S16"/>
    <property type="match status" value="1"/>
</dbReference>
<dbReference type="PANTHER" id="PTHR12919:SF20">
    <property type="entry name" value="SMALL RIBOSOMAL SUBUNIT PROTEIN BS16M"/>
    <property type="match status" value="1"/>
</dbReference>
<dbReference type="Pfam" id="PF00886">
    <property type="entry name" value="Ribosomal_S16"/>
    <property type="match status" value="1"/>
</dbReference>
<dbReference type="SUPFAM" id="SSF54565">
    <property type="entry name" value="Ribosomal protein S16"/>
    <property type="match status" value="1"/>
</dbReference>
<dbReference type="PROSITE" id="PS00732">
    <property type="entry name" value="RIBOSOMAL_S16"/>
    <property type="match status" value="1"/>
</dbReference>
<proteinExistence type="inferred from homology"/>
<reference key="1">
    <citation type="journal article" date="2009" name="Appl. Environ. Microbiol.">
        <title>Three genomes from the phylum Acidobacteria provide insight into the lifestyles of these microorganisms in soils.</title>
        <authorList>
            <person name="Ward N.L."/>
            <person name="Challacombe J.F."/>
            <person name="Janssen P.H."/>
            <person name="Henrissat B."/>
            <person name="Coutinho P.M."/>
            <person name="Wu M."/>
            <person name="Xie G."/>
            <person name="Haft D.H."/>
            <person name="Sait M."/>
            <person name="Badger J."/>
            <person name="Barabote R.D."/>
            <person name="Bradley B."/>
            <person name="Brettin T.S."/>
            <person name="Brinkac L.M."/>
            <person name="Bruce D."/>
            <person name="Creasy T."/>
            <person name="Daugherty S.C."/>
            <person name="Davidsen T.M."/>
            <person name="DeBoy R.T."/>
            <person name="Detter J.C."/>
            <person name="Dodson R.J."/>
            <person name="Durkin A.S."/>
            <person name="Ganapathy A."/>
            <person name="Gwinn-Giglio M."/>
            <person name="Han C.S."/>
            <person name="Khouri H."/>
            <person name="Kiss H."/>
            <person name="Kothari S.P."/>
            <person name="Madupu R."/>
            <person name="Nelson K.E."/>
            <person name="Nelson W.C."/>
            <person name="Paulsen I."/>
            <person name="Penn K."/>
            <person name="Ren Q."/>
            <person name="Rosovitz M.J."/>
            <person name="Selengut J.D."/>
            <person name="Shrivastava S."/>
            <person name="Sullivan S.A."/>
            <person name="Tapia R."/>
            <person name="Thompson L.S."/>
            <person name="Watkins K.L."/>
            <person name="Yang Q."/>
            <person name="Yu C."/>
            <person name="Zafar N."/>
            <person name="Zhou L."/>
            <person name="Kuske C.R."/>
        </authorList>
    </citation>
    <scope>NUCLEOTIDE SEQUENCE [LARGE SCALE GENOMIC DNA]</scope>
    <source>
        <strain>Ellin345</strain>
    </source>
</reference>